<feature type="initiator methionine" description="Removed" evidence="1">
    <location>
        <position position="1"/>
    </location>
</feature>
<feature type="chain" id="PRO_0000180327" description="3-oxoacyl-[acyl-carrier-protein] synthase 2">
    <location>
        <begin position="2"/>
        <end position="414"/>
    </location>
</feature>
<feature type="domain" description="Ketosynthase family 3 (KS3)" evidence="3">
    <location>
        <begin position="3"/>
        <end position="413"/>
    </location>
</feature>
<feature type="active site" description="For beta-ketoacyl synthase activity" evidence="3">
    <location>
        <position position="164"/>
    </location>
</feature>
<feature type="active site" description="For beta-ketoacyl synthase activity" evidence="3">
    <location>
        <position position="304"/>
    </location>
</feature>
<feature type="active site" description="For beta-ketoacyl synthase activity" evidence="3">
    <location>
        <position position="342"/>
    </location>
</feature>
<feature type="strand" evidence="7">
    <location>
        <begin position="6"/>
        <end position="15"/>
    </location>
</feature>
<feature type="strand" evidence="7">
    <location>
        <begin position="18"/>
        <end position="20"/>
    </location>
</feature>
<feature type="helix" evidence="7">
    <location>
        <begin position="21"/>
        <end position="29"/>
    </location>
</feature>
<feature type="strand" evidence="7">
    <location>
        <begin position="35"/>
        <end position="37"/>
    </location>
</feature>
<feature type="strand" evidence="7">
    <location>
        <begin position="50"/>
        <end position="52"/>
    </location>
</feature>
<feature type="helix" evidence="7">
    <location>
        <begin position="59"/>
        <end position="61"/>
    </location>
</feature>
<feature type="helix" evidence="7">
    <location>
        <begin position="65"/>
        <end position="68"/>
    </location>
</feature>
<feature type="helix" evidence="7">
    <location>
        <begin position="73"/>
        <end position="89"/>
    </location>
</feature>
<feature type="turn" evidence="7">
    <location>
        <begin position="95"/>
        <end position="97"/>
    </location>
</feature>
<feature type="helix" evidence="7">
    <location>
        <begin position="98"/>
        <end position="100"/>
    </location>
</feature>
<feature type="strand" evidence="7">
    <location>
        <begin position="101"/>
        <end position="106"/>
    </location>
</feature>
<feature type="helix" evidence="7">
    <location>
        <begin position="112"/>
        <end position="125"/>
    </location>
</feature>
<feature type="helix" evidence="7">
    <location>
        <begin position="127"/>
        <end position="129"/>
    </location>
</feature>
<feature type="helix" evidence="7">
    <location>
        <begin position="134"/>
        <end position="138"/>
    </location>
</feature>
<feature type="helix" evidence="7">
    <location>
        <begin position="142"/>
        <end position="151"/>
    </location>
</feature>
<feature type="helix" evidence="7">
    <location>
        <begin position="163"/>
        <end position="165"/>
    </location>
</feature>
<feature type="helix" evidence="7">
    <location>
        <begin position="166"/>
        <end position="180"/>
    </location>
</feature>
<feature type="strand" evidence="7">
    <location>
        <begin position="184"/>
        <end position="192"/>
    </location>
</feature>
<feature type="helix" evidence="7">
    <location>
        <begin position="197"/>
        <end position="205"/>
    </location>
</feature>
<feature type="helix" evidence="7">
    <location>
        <begin position="216"/>
        <end position="219"/>
    </location>
</feature>
<feature type="strand" evidence="7">
    <location>
        <begin position="235"/>
        <end position="243"/>
    </location>
</feature>
<feature type="helix" evidence="7">
    <location>
        <begin position="244"/>
        <end position="249"/>
    </location>
</feature>
<feature type="strand" evidence="7">
    <location>
        <begin position="256"/>
        <end position="265"/>
    </location>
</feature>
<feature type="strand" evidence="7">
    <location>
        <begin position="270"/>
        <end position="272"/>
    </location>
</feature>
<feature type="helix" evidence="7">
    <location>
        <begin position="278"/>
        <end position="291"/>
    </location>
</feature>
<feature type="helix" evidence="7">
    <location>
        <begin position="295"/>
        <end position="297"/>
    </location>
</feature>
<feature type="strand" evidence="7">
    <location>
        <begin position="298"/>
        <end position="302"/>
    </location>
</feature>
<feature type="helix" evidence="7">
    <location>
        <begin position="309"/>
        <end position="330"/>
    </location>
</feature>
<feature type="strand" evidence="7">
    <location>
        <begin position="332"/>
        <end position="334"/>
    </location>
</feature>
<feature type="helix" evidence="7">
    <location>
        <begin position="337"/>
        <end position="340"/>
    </location>
</feature>
<feature type="helix" evidence="7">
    <location>
        <begin position="344"/>
        <end position="346"/>
    </location>
</feature>
<feature type="helix" evidence="7">
    <location>
        <begin position="347"/>
        <end position="361"/>
    </location>
</feature>
<feature type="strand" evidence="7">
    <location>
        <begin position="371"/>
        <end position="373"/>
    </location>
</feature>
<feature type="strand" evidence="7">
    <location>
        <begin position="383"/>
        <end position="385"/>
    </location>
</feature>
<feature type="strand" evidence="7">
    <location>
        <begin position="394"/>
        <end position="401"/>
    </location>
</feature>
<feature type="turn" evidence="7">
    <location>
        <begin position="402"/>
        <end position="404"/>
    </location>
</feature>
<feature type="strand" evidence="7">
    <location>
        <begin position="405"/>
        <end position="413"/>
    </location>
</feature>
<proteinExistence type="evidence at protein level"/>
<organism>
    <name type="scientific">Vibrio cholerae serotype O1 (strain ATCC 39315 / El Tor Inaba N16961)</name>
    <dbReference type="NCBI Taxonomy" id="243277"/>
    <lineage>
        <taxon>Bacteria</taxon>
        <taxon>Pseudomonadati</taxon>
        <taxon>Pseudomonadota</taxon>
        <taxon>Gammaproteobacteria</taxon>
        <taxon>Vibrionales</taxon>
        <taxon>Vibrionaceae</taxon>
        <taxon>Vibrio</taxon>
    </lineage>
</organism>
<gene>
    <name type="primary">fabF</name>
    <name type="ordered locus">VC_2019</name>
</gene>
<accession>Q9KQH9</accession>
<sequence length="414" mass="43208">MSKRRVVVTGMGMLSPVGNTVESSWKALLAGQSGIVNIEHFDTTNFSTRFAGLVKGFDCEQYMSKKDARKMDLFIQYGIAAGIQALEDSGLEVNEENAARIGVAIGSGIGGLELIETGHQALIEKGPRKVSPFFVPSTIVNMIAGNLSIMRGLRGPNIAISTACTTGLHNIGHAARMIAYGDADAMVAGGAEKASTPLGMAGFGAAKALSTRNDEPQKASRPWDKDRDGFVLGDGAGIMVLEEYEHAKARGAKIYAEVVGFGMSGDAYHMTSPSEDGSGGALAMEAAMRDAGVTGEQIGYVNAHGTSTPAGDVAEVKGIKRALGEAGTKQVLVSSTKSMTGHLLGAAGSVEAIITVMSLVDQMVPPTINLDNPEEGLGVDLVPHVARKVESMEYAMCNSFGFGGTNGSLIFKRM</sequence>
<comment type="function">
    <text evidence="2">Involved in the type II fatty acid elongation cycle. Catalyzes the elongation of a wide range of acyl-ACP by the addition of two carbons from malonyl-ACP to an acyl acceptor. Can efficiently catalyze the conversion of palmitoleoyl-ACP (cis-hexadec-9-enoyl-ACP) to cis-vaccenoyl-ACP (cis-octadec-11-enoyl-ACP), an essential step in the thermal regulation of fatty acid composition.</text>
</comment>
<comment type="catalytic activity">
    <reaction evidence="2">
        <text>a fatty acyl-[ACP] + malonyl-[ACP] + H(+) = a 3-oxoacyl-[ACP] + holo-[ACP] + CO2</text>
        <dbReference type="Rhea" id="RHEA:22836"/>
        <dbReference type="Rhea" id="RHEA-COMP:9623"/>
        <dbReference type="Rhea" id="RHEA-COMP:9685"/>
        <dbReference type="Rhea" id="RHEA-COMP:9916"/>
        <dbReference type="Rhea" id="RHEA-COMP:14125"/>
        <dbReference type="ChEBI" id="CHEBI:15378"/>
        <dbReference type="ChEBI" id="CHEBI:16526"/>
        <dbReference type="ChEBI" id="CHEBI:64479"/>
        <dbReference type="ChEBI" id="CHEBI:78449"/>
        <dbReference type="ChEBI" id="CHEBI:78776"/>
        <dbReference type="ChEBI" id="CHEBI:138651"/>
    </reaction>
</comment>
<comment type="catalytic activity">
    <reaction evidence="2">
        <text>(9Z)-hexadecenoyl-[ACP] + malonyl-[ACP] + H(+) = 3-oxo-(11Z)-octadecenoyl-[ACP] + holo-[ACP] + CO2</text>
        <dbReference type="Rhea" id="RHEA:55040"/>
        <dbReference type="Rhea" id="RHEA-COMP:9623"/>
        <dbReference type="Rhea" id="RHEA-COMP:9685"/>
        <dbReference type="Rhea" id="RHEA-COMP:10800"/>
        <dbReference type="Rhea" id="RHEA-COMP:14074"/>
        <dbReference type="ChEBI" id="CHEBI:15378"/>
        <dbReference type="ChEBI" id="CHEBI:16526"/>
        <dbReference type="ChEBI" id="CHEBI:64479"/>
        <dbReference type="ChEBI" id="CHEBI:78449"/>
        <dbReference type="ChEBI" id="CHEBI:83989"/>
        <dbReference type="ChEBI" id="CHEBI:138538"/>
        <dbReference type="EC" id="2.3.1.179"/>
    </reaction>
</comment>
<comment type="pathway">
    <text evidence="2">Lipid metabolism; fatty acid biosynthesis.</text>
</comment>
<comment type="subunit">
    <text evidence="2">Homodimer.</text>
</comment>
<comment type="similarity">
    <text evidence="4">Belongs to the thiolase-like superfamily. Beta-ketoacyl-ACP synthases family.</text>
</comment>
<reference key="1">
    <citation type="journal article" date="2000" name="Nature">
        <title>DNA sequence of both chromosomes of the cholera pathogen Vibrio cholerae.</title>
        <authorList>
            <person name="Heidelberg J.F."/>
            <person name="Eisen J.A."/>
            <person name="Nelson W.C."/>
            <person name="Clayton R.A."/>
            <person name="Gwinn M.L."/>
            <person name="Dodson R.J."/>
            <person name="Haft D.H."/>
            <person name="Hickey E.K."/>
            <person name="Peterson J.D."/>
            <person name="Umayam L.A."/>
            <person name="Gill S.R."/>
            <person name="Nelson K.E."/>
            <person name="Read T.D."/>
            <person name="Tettelin H."/>
            <person name="Richardson D.L."/>
            <person name="Ermolaeva M.D."/>
            <person name="Vamathevan J.J."/>
            <person name="Bass S."/>
            <person name="Qin H."/>
            <person name="Dragoi I."/>
            <person name="Sellers P."/>
            <person name="McDonald L.A."/>
            <person name="Utterback T.R."/>
            <person name="Fleischmann R.D."/>
            <person name="Nierman W.C."/>
            <person name="White O."/>
            <person name="Salzberg S.L."/>
            <person name="Smith H.O."/>
            <person name="Colwell R.R."/>
            <person name="Mekalanos J.J."/>
            <person name="Venter J.C."/>
            <person name="Fraser C.M."/>
        </authorList>
    </citation>
    <scope>NUCLEOTIDE SEQUENCE [LARGE SCALE GENOMIC DNA]</scope>
    <source>
        <strain>ATCC 39315 / El Tor Inaba N16961</strain>
    </source>
</reference>
<reference evidence="5 6" key="2">
    <citation type="submission" date="2013-03" db="PDB data bank">
        <title>Crystal structure of beta-ketoacyl-ACP synthase II (FabF) from Vibrio cholerae (space group P43) at 2.2 Angstrom.</title>
        <authorList>
            <person name="Hou J."/>
            <person name="Chruszcz M."/>
            <person name="Shabalin I.G."/>
            <person name="Zheng H."/>
            <person name="Cooper D.R."/>
            <person name="Anderson W.F."/>
            <person name="Minor W."/>
        </authorList>
    </citation>
    <scope>X-RAY CRYSTALLOGRAPHY (1.75 ANGSTROMS)</scope>
    <source>
        <strain>ATCC 39315 / El Tor Inaba N16961</strain>
    </source>
</reference>
<evidence type="ECO:0000250" key="1"/>
<evidence type="ECO:0000250" key="2">
    <source>
        <dbReference type="UniProtKB" id="P0AAI5"/>
    </source>
</evidence>
<evidence type="ECO:0000255" key="3">
    <source>
        <dbReference type="PROSITE-ProRule" id="PRU01348"/>
    </source>
</evidence>
<evidence type="ECO:0000305" key="4"/>
<evidence type="ECO:0007744" key="5">
    <source>
        <dbReference type="PDB" id="4JRH"/>
    </source>
</evidence>
<evidence type="ECO:0007744" key="6">
    <source>
        <dbReference type="PDB" id="4JRM"/>
    </source>
</evidence>
<evidence type="ECO:0007829" key="7">
    <source>
        <dbReference type="PDB" id="4JRM"/>
    </source>
</evidence>
<keyword id="KW-0002">3D-structure</keyword>
<keyword id="KW-0012">Acyltransferase</keyword>
<keyword id="KW-0275">Fatty acid biosynthesis</keyword>
<keyword id="KW-0276">Fatty acid metabolism</keyword>
<keyword id="KW-0444">Lipid biosynthesis</keyword>
<keyword id="KW-0443">Lipid metabolism</keyword>
<keyword id="KW-1185">Reference proteome</keyword>
<keyword id="KW-0808">Transferase</keyword>
<name>FABF_VIBCH</name>
<dbReference type="EC" id="2.3.1.179" evidence="2"/>
<dbReference type="EMBL" id="AE003852">
    <property type="protein sequence ID" value="AAF95167.1"/>
    <property type="molecule type" value="Genomic_DNA"/>
</dbReference>
<dbReference type="PIR" id="D82128">
    <property type="entry name" value="D82128"/>
</dbReference>
<dbReference type="RefSeq" id="NP_231653.1">
    <property type="nucleotide sequence ID" value="NC_002505.1"/>
</dbReference>
<dbReference type="RefSeq" id="WP_000044695.1">
    <property type="nucleotide sequence ID" value="NZ_LT906614.1"/>
</dbReference>
<dbReference type="PDB" id="4JRH">
    <property type="method" value="X-ray"/>
    <property type="resolution" value="2.20 A"/>
    <property type="chains" value="A/B=1-414"/>
</dbReference>
<dbReference type="PDB" id="4JRM">
    <property type="method" value="X-ray"/>
    <property type="resolution" value="1.75 A"/>
    <property type="chains" value="A/B/C/D=1-414"/>
</dbReference>
<dbReference type="PDBsum" id="4JRH"/>
<dbReference type="PDBsum" id="4JRM"/>
<dbReference type="SMR" id="Q9KQH9"/>
<dbReference type="STRING" id="243277.VC_2019"/>
<dbReference type="DNASU" id="2613398"/>
<dbReference type="EnsemblBacteria" id="AAF95167">
    <property type="protein sequence ID" value="AAF95167"/>
    <property type="gene ID" value="VC_2019"/>
</dbReference>
<dbReference type="GeneID" id="89513994"/>
<dbReference type="KEGG" id="vch:VC_2019"/>
<dbReference type="PATRIC" id="fig|243277.26.peg.1929"/>
<dbReference type="eggNOG" id="COG0304">
    <property type="taxonomic scope" value="Bacteria"/>
</dbReference>
<dbReference type="HOGENOM" id="CLU_000022_69_2_6"/>
<dbReference type="UniPathway" id="UPA00094"/>
<dbReference type="EvolutionaryTrace" id="Q9KQH9"/>
<dbReference type="Proteomes" id="UP000000584">
    <property type="component" value="Chromosome 1"/>
</dbReference>
<dbReference type="GO" id="GO:0005829">
    <property type="term" value="C:cytosol"/>
    <property type="evidence" value="ECO:0000318"/>
    <property type="project" value="GO_Central"/>
</dbReference>
<dbReference type="GO" id="GO:0004315">
    <property type="term" value="F:3-oxoacyl-[acyl-carrier-protein] synthase activity"/>
    <property type="evidence" value="ECO:0000318"/>
    <property type="project" value="GO_Central"/>
</dbReference>
<dbReference type="GO" id="GO:0006633">
    <property type="term" value="P:fatty acid biosynthetic process"/>
    <property type="evidence" value="ECO:0000318"/>
    <property type="project" value="GO_Central"/>
</dbReference>
<dbReference type="CDD" id="cd00834">
    <property type="entry name" value="KAS_I_II"/>
    <property type="match status" value="1"/>
</dbReference>
<dbReference type="FunFam" id="3.40.47.10:FF:000009">
    <property type="entry name" value="3-oxoacyl-[acyl-carrier-protein] synthase 2"/>
    <property type="match status" value="1"/>
</dbReference>
<dbReference type="Gene3D" id="3.40.47.10">
    <property type="match status" value="1"/>
</dbReference>
<dbReference type="InterPro" id="IPR017568">
    <property type="entry name" value="3-oxoacyl-ACP_synth-2"/>
</dbReference>
<dbReference type="InterPro" id="IPR000794">
    <property type="entry name" value="Beta-ketoacyl_synthase"/>
</dbReference>
<dbReference type="InterPro" id="IPR018201">
    <property type="entry name" value="Ketoacyl_synth_AS"/>
</dbReference>
<dbReference type="InterPro" id="IPR014031">
    <property type="entry name" value="Ketoacyl_synth_C"/>
</dbReference>
<dbReference type="InterPro" id="IPR014030">
    <property type="entry name" value="Ketoacyl_synth_N"/>
</dbReference>
<dbReference type="InterPro" id="IPR020841">
    <property type="entry name" value="PKS_Beta-ketoAc_synthase_dom"/>
</dbReference>
<dbReference type="InterPro" id="IPR016039">
    <property type="entry name" value="Thiolase-like"/>
</dbReference>
<dbReference type="NCBIfam" id="TIGR03150">
    <property type="entry name" value="fabF"/>
    <property type="match status" value="1"/>
</dbReference>
<dbReference type="NCBIfam" id="NF004970">
    <property type="entry name" value="PRK06333.1"/>
    <property type="match status" value="1"/>
</dbReference>
<dbReference type="NCBIfam" id="NF005589">
    <property type="entry name" value="PRK07314.1"/>
    <property type="match status" value="1"/>
</dbReference>
<dbReference type="NCBIfam" id="NF006434">
    <property type="entry name" value="PRK08722.1"/>
    <property type="match status" value="1"/>
</dbReference>
<dbReference type="PANTHER" id="PTHR11712:SF336">
    <property type="entry name" value="3-OXOACYL-[ACYL-CARRIER-PROTEIN] SYNTHASE, MITOCHONDRIAL"/>
    <property type="match status" value="1"/>
</dbReference>
<dbReference type="PANTHER" id="PTHR11712">
    <property type="entry name" value="POLYKETIDE SYNTHASE-RELATED"/>
    <property type="match status" value="1"/>
</dbReference>
<dbReference type="Pfam" id="PF00109">
    <property type="entry name" value="ketoacyl-synt"/>
    <property type="match status" value="1"/>
</dbReference>
<dbReference type="Pfam" id="PF02801">
    <property type="entry name" value="Ketoacyl-synt_C"/>
    <property type="match status" value="1"/>
</dbReference>
<dbReference type="PIRSF" id="PIRSF000447">
    <property type="entry name" value="KAS_II"/>
    <property type="match status" value="1"/>
</dbReference>
<dbReference type="SMART" id="SM00825">
    <property type="entry name" value="PKS_KS"/>
    <property type="match status" value="1"/>
</dbReference>
<dbReference type="SUPFAM" id="SSF53901">
    <property type="entry name" value="Thiolase-like"/>
    <property type="match status" value="2"/>
</dbReference>
<dbReference type="PROSITE" id="PS00606">
    <property type="entry name" value="KS3_1"/>
    <property type="match status" value="1"/>
</dbReference>
<dbReference type="PROSITE" id="PS52004">
    <property type="entry name" value="KS3_2"/>
    <property type="match status" value="1"/>
</dbReference>
<protein>
    <recommendedName>
        <fullName>3-oxoacyl-[acyl-carrier-protein] synthase 2</fullName>
        <ecNumber evidence="2">2.3.1.179</ecNumber>
    </recommendedName>
    <alternativeName>
        <fullName>3-oxoacyl-[acyl-carrier-protein] synthase II</fullName>
    </alternativeName>
    <alternativeName>
        <fullName>Beta-ketoacyl-ACP synthase II</fullName>
        <shortName>KAS II</shortName>
    </alternativeName>
</protein>